<keyword id="KW-1185">Reference proteome</keyword>
<proteinExistence type="inferred from homology"/>
<reference key="1">
    <citation type="journal article" date="2008" name="Environ. Microbiol.">
        <title>The genome of Erwinia tasmaniensis strain Et1/99, a non-pathogenic bacterium in the genus Erwinia.</title>
        <authorList>
            <person name="Kube M."/>
            <person name="Migdoll A.M."/>
            <person name="Mueller I."/>
            <person name="Kuhl H."/>
            <person name="Beck A."/>
            <person name="Reinhardt R."/>
            <person name="Geider K."/>
        </authorList>
    </citation>
    <scope>NUCLEOTIDE SEQUENCE [LARGE SCALE GENOMIC DNA]</scope>
    <source>
        <strain>DSM 17950 / CFBP 7177 / CIP 109463 / NCPPB 4357 / Et1/99</strain>
    </source>
</reference>
<sequence>MEYEFLKDVTGVVKVRMSMGHEAIGHWFNDEVNGHPEILAEVEAAIAGVKGSERQWQRVGREYTLLLDEEEVMIRANQLGFEGDDMEEGMNYYDEESLSFCGVEDFLAIIAAYRAFLLGR</sequence>
<comment type="similarity">
    <text evidence="1">Belongs to the UPF0231 family.</text>
</comment>
<accession>B2VD27</accession>
<protein>
    <recommendedName>
        <fullName evidence="1">UPF0231 protein ETA_08290</fullName>
    </recommendedName>
</protein>
<evidence type="ECO:0000255" key="1">
    <source>
        <dbReference type="HAMAP-Rule" id="MF_01053"/>
    </source>
</evidence>
<organism>
    <name type="scientific">Erwinia tasmaniensis (strain DSM 17950 / CFBP 7177 / CIP 109463 / NCPPB 4357 / Et1/99)</name>
    <dbReference type="NCBI Taxonomy" id="465817"/>
    <lineage>
        <taxon>Bacteria</taxon>
        <taxon>Pseudomonadati</taxon>
        <taxon>Pseudomonadota</taxon>
        <taxon>Gammaproteobacteria</taxon>
        <taxon>Enterobacterales</taxon>
        <taxon>Erwiniaceae</taxon>
        <taxon>Erwinia</taxon>
    </lineage>
</organism>
<dbReference type="EMBL" id="CU468135">
    <property type="protein sequence ID" value="CAO95875.1"/>
    <property type="molecule type" value="Genomic_DNA"/>
</dbReference>
<dbReference type="RefSeq" id="WP_012440577.1">
    <property type="nucleotide sequence ID" value="NC_010694.1"/>
</dbReference>
<dbReference type="STRING" id="465817.ETA_08290"/>
<dbReference type="KEGG" id="eta:ETA_08290"/>
<dbReference type="eggNOG" id="COG3112">
    <property type="taxonomic scope" value="Bacteria"/>
</dbReference>
<dbReference type="HOGENOM" id="CLU_139226_0_0_6"/>
<dbReference type="OrthoDB" id="5739292at2"/>
<dbReference type="Proteomes" id="UP000001726">
    <property type="component" value="Chromosome"/>
</dbReference>
<dbReference type="HAMAP" id="MF_01053">
    <property type="entry name" value="UPF0231"/>
    <property type="match status" value="1"/>
</dbReference>
<dbReference type="InterPro" id="IPR008249">
    <property type="entry name" value="UPF0231"/>
</dbReference>
<dbReference type="NCBIfam" id="NF003574">
    <property type="entry name" value="PRK05248.1-1"/>
    <property type="match status" value="1"/>
</dbReference>
<dbReference type="NCBIfam" id="NF003576">
    <property type="entry name" value="PRK05248.1-3"/>
    <property type="match status" value="1"/>
</dbReference>
<dbReference type="Pfam" id="PF06062">
    <property type="entry name" value="UPF0231"/>
    <property type="match status" value="1"/>
</dbReference>
<dbReference type="PIRSF" id="PIRSF006287">
    <property type="entry name" value="UCP006287"/>
    <property type="match status" value="1"/>
</dbReference>
<feature type="chain" id="PRO_1000136297" description="UPF0231 protein ETA_08290">
    <location>
        <begin position="1"/>
        <end position="120"/>
    </location>
</feature>
<gene>
    <name type="ordered locus">ETA_08290</name>
</gene>
<name>Y829_ERWT9</name>